<feature type="chain" id="PRO_0000430770" description="Polysialic acid O-acetyltransferase">
    <location>
        <begin position="1"/>
        <end position="215"/>
    </location>
</feature>
<feature type="binding site" evidence="1">
    <location>
        <begin position="119"/>
        <end position="121"/>
    </location>
    <ligand>
        <name>acetyl-CoA</name>
        <dbReference type="ChEBI" id="CHEBI:57288"/>
    </ligand>
</feature>
<feature type="binding site" evidence="1">
    <location>
        <position position="148"/>
    </location>
    <ligand>
        <name>acetyl-CoA</name>
        <dbReference type="ChEBI" id="CHEBI:57288"/>
    </ligand>
</feature>
<feature type="binding site" evidence="1">
    <location>
        <position position="154"/>
    </location>
    <ligand>
        <name>acetyl-CoA</name>
        <dbReference type="ChEBI" id="CHEBI:57288"/>
    </ligand>
</feature>
<feature type="binding site" evidence="1">
    <location>
        <position position="166"/>
    </location>
    <ligand>
        <name>acetyl-CoA</name>
        <dbReference type="ChEBI" id="CHEBI:57288"/>
    </ligand>
</feature>
<feature type="binding site" evidence="1">
    <location>
        <begin position="171"/>
        <end position="172"/>
    </location>
    <ligand>
        <name>acetyl-CoA</name>
        <dbReference type="ChEBI" id="CHEBI:57288"/>
    </ligand>
</feature>
<feature type="binding site" evidence="1">
    <location>
        <position position="190"/>
    </location>
    <ligand>
        <name>acetyl-CoA</name>
        <dbReference type="ChEBI" id="CHEBI:57288"/>
    </ligand>
</feature>
<feature type="mutagenesis site" description="Reduces activity 50-fold." evidence="1">
    <original>H</original>
    <variation>A</variation>
    <location>
        <position position="121"/>
    </location>
</feature>
<feature type="mutagenesis site" description="Reduces activity 56-fold." evidence="1">
    <original>W</original>
    <variation>A</variation>
    <location>
        <position position="145"/>
    </location>
</feature>
<feature type="mutagenesis site" description="Reduces activity 48-fold." evidence="1">
    <original>Y</original>
    <variation>A</variation>
    <location>
        <position position="171"/>
    </location>
</feature>
<feature type="strand" evidence="7">
    <location>
        <begin position="7"/>
        <end position="12"/>
    </location>
</feature>
<feature type="strand" evidence="7">
    <location>
        <begin position="14"/>
        <end position="17"/>
    </location>
</feature>
<feature type="strand" evidence="7">
    <location>
        <begin position="27"/>
        <end position="34"/>
    </location>
</feature>
<feature type="strand" evidence="7">
    <location>
        <begin position="36"/>
        <end position="39"/>
    </location>
</feature>
<feature type="strand" evidence="7">
    <location>
        <begin position="44"/>
        <end position="47"/>
    </location>
</feature>
<feature type="strand" evidence="7">
    <location>
        <begin position="49"/>
        <end position="56"/>
    </location>
</feature>
<feature type="strand" evidence="7">
    <location>
        <begin position="58"/>
        <end position="61"/>
    </location>
</feature>
<feature type="strand" evidence="7">
    <location>
        <begin position="66"/>
        <end position="74"/>
    </location>
</feature>
<feature type="strand" evidence="7">
    <location>
        <begin position="79"/>
        <end position="82"/>
    </location>
</feature>
<feature type="strand" evidence="7">
    <location>
        <begin position="90"/>
        <end position="95"/>
    </location>
</feature>
<feature type="strand" evidence="7">
    <location>
        <begin position="100"/>
        <end position="103"/>
    </location>
</feature>
<feature type="strand" evidence="7">
    <location>
        <begin position="113"/>
        <end position="117"/>
    </location>
</feature>
<feature type="strand" evidence="7">
    <location>
        <begin position="123"/>
        <end position="125"/>
    </location>
</feature>
<feature type="turn" evidence="7">
    <location>
        <begin position="126"/>
        <end position="128"/>
    </location>
</feature>
<feature type="strand" evidence="7">
    <location>
        <begin position="138"/>
        <end position="140"/>
    </location>
</feature>
<feature type="strand" evidence="6">
    <location>
        <begin position="160"/>
        <end position="164"/>
    </location>
</feature>
<feature type="strand" evidence="7">
    <location>
        <begin position="180"/>
        <end position="182"/>
    </location>
</feature>
<feature type="turn" evidence="7">
    <location>
        <begin position="183"/>
        <end position="186"/>
    </location>
</feature>
<feature type="strand" evidence="7">
    <location>
        <begin position="187"/>
        <end position="190"/>
    </location>
</feature>
<feature type="strand" evidence="7">
    <location>
        <begin position="192"/>
        <end position="195"/>
    </location>
</feature>
<feature type="helix" evidence="7">
    <location>
        <begin position="204"/>
        <end position="206"/>
    </location>
</feature>
<feature type="helix" evidence="7">
    <location>
        <begin position="211"/>
        <end position="214"/>
    </location>
</feature>
<proteinExistence type="evidence at protein level"/>
<reference key="1">
    <citation type="journal article" date="1997" name="Mol. Gen. Genet.">
        <title>Molecular divergence of the sia locus in different serogroups of Neisseria meningitidis expressing polysialic acid capsules.</title>
        <authorList>
            <person name="Claus H."/>
            <person name="Vogel U."/>
            <person name="Muhlenhoff M."/>
            <person name="Gerardy-Schahn R."/>
            <person name="Frosch M."/>
        </authorList>
    </citation>
    <scope>NUCLEOTIDE SEQUENCE [GENOMIC DNA]</scope>
    <source>
        <strain>Serogroup Y</strain>
    </source>
</reference>
<reference key="2">
    <citation type="journal article" date="2009" name="J. Biol. Chem.">
        <title>Structural and kinetic characterizations of the polysialic acid O-acetyltransferase OatWY from Neisseria meningitidis.</title>
        <authorList>
            <person name="Lee H.J."/>
            <person name="Rakic B."/>
            <person name="Gilbert M."/>
            <person name="Wakarchuk W.W."/>
            <person name="Withers S.G."/>
            <person name="Strynadka N.C."/>
        </authorList>
    </citation>
    <scope>X-RAY CRYSTALLOGRAPHY (1.90 ANGSTROMS) IN COMPLEX WITH ACETYL-COA</scope>
    <scope>FUNCTION</scope>
    <scope>CATALYTIC ACTIVITY</scope>
    <scope>BIOPHYSICOCHEMICAL PROPERTIES</scope>
    <scope>SUBUNIT</scope>
    <scope>MUTAGENESIS OF HIS-121; TRP-145 AND TYR-171</scope>
</reference>
<name>OATWY_NEIME</name>
<organism evidence="5">
    <name type="scientific">Neisseria meningitidis</name>
    <dbReference type="NCBI Taxonomy" id="487"/>
    <lineage>
        <taxon>Bacteria</taxon>
        <taxon>Pseudomonadati</taxon>
        <taxon>Pseudomonadota</taxon>
        <taxon>Betaproteobacteria</taxon>
        <taxon>Neisseriales</taxon>
        <taxon>Neisseriaceae</taxon>
        <taxon>Neisseria</taxon>
    </lineage>
</organism>
<protein>
    <recommendedName>
        <fullName evidence="2">Polysialic acid O-acetyltransferase</fullName>
        <ecNumber evidence="1">2.3.1.-</ecNumber>
    </recommendedName>
    <alternativeName>
        <fullName evidence="3">Polysialyltransferase</fullName>
        <shortName evidence="3">PST</shortName>
    </alternativeName>
</protein>
<evidence type="ECO:0000269" key="1">
    <source>
    </source>
</evidence>
<evidence type="ECO:0000303" key="2">
    <source>
    </source>
</evidence>
<evidence type="ECO:0000303" key="3">
    <source>
    </source>
</evidence>
<evidence type="ECO:0000305" key="4"/>
<evidence type="ECO:0000312" key="5">
    <source>
        <dbReference type="EMBL" id="CAC38867.1"/>
    </source>
</evidence>
<evidence type="ECO:0007829" key="6">
    <source>
        <dbReference type="PDB" id="2WLE"/>
    </source>
</evidence>
<evidence type="ECO:0007829" key="7">
    <source>
        <dbReference type="PDB" id="2WLG"/>
    </source>
</evidence>
<sequence length="215" mass="23705">MGTHMYSEQGINNTINISTTSLTNATQLTVIGNNNSVYIGNNCKIVSSNIRLKGNNITLFIADDVENMGLVCSLHSDCSLQIQAKTTMGNGEITIAEKGKISIGKDCMLAHGYEIRNTDMHPIYSLENGERINHGKDVIIGNHVWLGRNVTILKGVCIPNNVVVGSHTVLYKSFKEPNCVIAGSPAKIVKENIVWGRKMYHSTMYDDPTLNEFYK</sequence>
<accession>Q93S40</accession>
<gene>
    <name evidence="2" type="primary">oatWY</name>
    <name evidence="3" type="synonym">siaD</name>
</gene>
<comment type="function">
    <text evidence="1">Catalyzes the O-acetylation of capsular polymeric sialic acid consisting of polymers of (2-&gt;6)-alpha-D-glucosyl-(1-&gt;4)-N-acetyl-alpha-D-neuraminosyl residues. Shows high substrate specificity toward polymers of sialic acid that contains a large number of residues.</text>
</comment>
<comment type="catalytic activity">
    <reaction evidence="1">
        <text>[(2-&gt;6)-alpha-D-glucosyl-(1-&gt;4)-N-acetyl-alpha-D-neuraminosyl](n) + n acetyl-CoA = [(2-&gt;6)-alpha-D-glucosyl-(1-&gt;4)-N,7-O-diacetyl-alpha-D-neuraminosyl](n) + n CoA</text>
        <dbReference type="Rhea" id="RHEA:55848"/>
        <dbReference type="Rhea" id="RHEA-COMP:14318"/>
        <dbReference type="Rhea" id="RHEA-COMP:14319"/>
        <dbReference type="ChEBI" id="CHEBI:57287"/>
        <dbReference type="ChEBI" id="CHEBI:57288"/>
        <dbReference type="ChEBI" id="CHEBI:139287"/>
        <dbReference type="ChEBI" id="CHEBI:139288"/>
    </reaction>
</comment>
<comment type="catalytic activity">
    <reaction evidence="1">
        <text>[(2-&gt;6)-alpha-D-glucosyl-(1-&gt;4)-N-acetyl-alpha-D-neuraminosyl](n) + n acetyl-CoA = [(2-&gt;6)-alpha-D-glucosyl-(1-&gt;4)-N,O(9)-diacetyl-alpha-D-neuraminosyl](n) + n CoA</text>
        <dbReference type="Rhea" id="RHEA:55852"/>
        <dbReference type="Rhea" id="RHEA-COMP:14318"/>
        <dbReference type="Rhea" id="RHEA-COMP:14320"/>
        <dbReference type="ChEBI" id="CHEBI:57287"/>
        <dbReference type="ChEBI" id="CHEBI:57288"/>
        <dbReference type="ChEBI" id="CHEBI:139287"/>
        <dbReference type="ChEBI" id="CHEBI:139289"/>
    </reaction>
</comment>
<comment type="biophysicochemical properties">
    <kinetics>
        <KM evidence="1">210 uM for acetyl-CoA</KM>
        <KM evidence="1">18.5 uM for polymer of sialic acid</KM>
        <text evidence="1">kcat is 1.3 sec(-1) with acetyl-CoA as substrate. kcat is 2.1 sec(-1) with polymer of sialic acid as substrate.</text>
    </kinetics>
</comment>
<comment type="subunit">
    <text evidence="1">Homotrimer.</text>
</comment>
<comment type="miscellaneous">
    <text evidence="2">Polymeric sialic acid-containing capsule provides a means for the bacteria to evade the immune response during infection by mimicking host sialic acid-containing cell surface structures. O-acetylation of the sialic acid residues of capsular polysaccharides alters their immunogenicity and susceptibility to glycosidases.</text>
</comment>
<comment type="similarity">
    <text evidence="4">Belongs to the transferase hexapeptide repeat family.</text>
</comment>
<keyword id="KW-0002">3D-structure</keyword>
<keyword id="KW-0808">Transferase</keyword>
<dbReference type="EC" id="2.3.1.-" evidence="1"/>
<dbReference type="EMBL" id="Y13969">
    <property type="protein sequence ID" value="CAC38867.1"/>
    <property type="molecule type" value="Genomic_DNA"/>
</dbReference>
<dbReference type="PDB" id="2WLC">
    <property type="method" value="X-ray"/>
    <property type="resolution" value="1.95 A"/>
    <property type="chains" value="A=1-215"/>
</dbReference>
<dbReference type="PDB" id="2WLD">
    <property type="method" value="X-ray"/>
    <property type="resolution" value="2.20 A"/>
    <property type="chains" value="A/B/C=1-215"/>
</dbReference>
<dbReference type="PDB" id="2WLE">
    <property type="method" value="X-ray"/>
    <property type="resolution" value="2.19 A"/>
    <property type="chains" value="A/B/C=1-215"/>
</dbReference>
<dbReference type="PDB" id="2WLF">
    <property type="method" value="X-ray"/>
    <property type="resolution" value="2.35 A"/>
    <property type="chains" value="A/B/C=1-215"/>
</dbReference>
<dbReference type="PDB" id="2WLG">
    <property type="method" value="X-ray"/>
    <property type="resolution" value="1.90 A"/>
    <property type="chains" value="A/B/C=1-215"/>
</dbReference>
<dbReference type="PDBsum" id="2WLC"/>
<dbReference type="PDBsum" id="2WLD"/>
<dbReference type="PDBsum" id="2WLE"/>
<dbReference type="PDBsum" id="2WLF"/>
<dbReference type="PDBsum" id="2WLG"/>
<dbReference type="SMR" id="Q93S40"/>
<dbReference type="EvolutionaryTrace" id="Q93S40"/>
<dbReference type="GO" id="GO:0050208">
    <property type="term" value="F:polysialic-acid O-acetyltransferase activity"/>
    <property type="evidence" value="ECO:0000314"/>
    <property type="project" value="UniProtKB"/>
</dbReference>
<dbReference type="GO" id="GO:0070207">
    <property type="term" value="P:protein homotrimerization"/>
    <property type="evidence" value="ECO:0000314"/>
    <property type="project" value="UniProtKB"/>
</dbReference>
<dbReference type="CDD" id="cd04647">
    <property type="entry name" value="LbH_MAT_like"/>
    <property type="match status" value="1"/>
</dbReference>
<dbReference type="Gene3D" id="2.160.10.10">
    <property type="entry name" value="Hexapeptide repeat proteins"/>
    <property type="match status" value="1"/>
</dbReference>
<dbReference type="InterPro" id="IPR001451">
    <property type="entry name" value="Hexapep"/>
</dbReference>
<dbReference type="InterPro" id="IPR051159">
    <property type="entry name" value="Hexapeptide_acetyltransf"/>
</dbReference>
<dbReference type="InterPro" id="IPR011004">
    <property type="entry name" value="Trimer_LpxA-like_sf"/>
</dbReference>
<dbReference type="PANTHER" id="PTHR23416:SF78">
    <property type="entry name" value="LIPOPOLYSACCHARIDE BIOSYNTHESIS O-ACETYL TRANSFERASE WBBJ-RELATED"/>
    <property type="match status" value="1"/>
</dbReference>
<dbReference type="PANTHER" id="PTHR23416">
    <property type="entry name" value="SIALIC ACID SYNTHASE-RELATED"/>
    <property type="match status" value="1"/>
</dbReference>
<dbReference type="Pfam" id="PF00132">
    <property type="entry name" value="Hexapep"/>
    <property type="match status" value="1"/>
</dbReference>
<dbReference type="SUPFAM" id="SSF51161">
    <property type="entry name" value="Trimeric LpxA-like enzymes"/>
    <property type="match status" value="1"/>
</dbReference>